<organism>
    <name type="scientific">Vibrio cholerae serotype O1 (strain ATCC 39541 / Classical Ogawa 395 / O395)</name>
    <dbReference type="NCBI Taxonomy" id="345073"/>
    <lineage>
        <taxon>Bacteria</taxon>
        <taxon>Pseudomonadati</taxon>
        <taxon>Pseudomonadota</taxon>
        <taxon>Gammaproteobacteria</taxon>
        <taxon>Vibrionales</taxon>
        <taxon>Vibrionaceae</taxon>
        <taxon>Vibrio</taxon>
    </lineage>
</organism>
<comment type="function">
    <text evidence="1 3 5">Ferric-siderophore reductase involved in iron removal from the siderophores after their transport into the cell (Probable). Involved in intracellular removal of iron from iron-vibriobactin complex. Vibriobactin is an iron-chelating compound involved in the transport of iron from the bacterial environment into the cell cytoplasm (PubMed:8083157). Ferric-vibriobactin reductase catalyzing the reduction of Fe(3+)-vibriobactin, a catecholate siderophore synthesized by V.cholerae (By similarity).</text>
</comment>
<comment type="catalytic activity">
    <reaction evidence="1">
        <text>2 a Fe(II)-siderophore + NAD(+) + H(+) = 2 a Fe(III)-siderophore + NADH</text>
        <dbReference type="Rhea" id="RHEA:15061"/>
        <dbReference type="Rhea" id="RHEA-COMP:11342"/>
        <dbReference type="Rhea" id="RHEA-COMP:11344"/>
        <dbReference type="ChEBI" id="CHEBI:15378"/>
        <dbReference type="ChEBI" id="CHEBI:29033"/>
        <dbReference type="ChEBI" id="CHEBI:29034"/>
        <dbReference type="ChEBI" id="CHEBI:57540"/>
        <dbReference type="ChEBI" id="CHEBI:57945"/>
        <dbReference type="EC" id="1.16.1.7"/>
    </reaction>
    <physiologicalReaction direction="right-to-left" evidence="1">
        <dbReference type="Rhea" id="RHEA:15063"/>
    </physiologicalReaction>
</comment>
<comment type="cofactor">
    <cofactor evidence="1">
        <name>FAD</name>
        <dbReference type="ChEBI" id="CHEBI:57692"/>
    </cofactor>
</comment>
<comment type="subcellular location">
    <subcellularLocation>
        <location evidence="5">Cytoplasm</location>
    </subcellularLocation>
</comment>
<comment type="induction">
    <text evidence="3">By iron starvation and Fur.</text>
</comment>
<comment type="disruption phenotype">
    <text evidence="3">Cells lacking this gene are unable to utilize exogenous ferric vibriobactin but synthesize the siderophore normally.</text>
</comment>
<comment type="similarity">
    <text evidence="5">Belongs to the SIP oxidoreductase family.</text>
</comment>
<keyword id="KW-0963">Cytoplasm</keyword>
<keyword id="KW-0274">FAD</keyword>
<keyword id="KW-0285">Flavoprotein</keyword>
<keyword id="KW-0520">NAD</keyword>
<keyword id="KW-0560">Oxidoreductase</keyword>
<proteinExistence type="evidence at protein level"/>
<accession>A5F660</accession>
<accession>C3M3G7</accession>
<accession>Q56646</accession>
<accession>Q9JQ01</accession>
<gene>
    <name evidence="4 6 7" type="primary">viuB</name>
    <name evidence="6" type="ordered locus">VC0395_A1802</name>
    <name evidence="7" type="ordered locus">VC395_2326</name>
</gene>
<feature type="chain" id="PRO_0000324782" description="Ferric vibriobactin reductase ViuB">
    <location>
        <begin position="1"/>
        <end position="271"/>
    </location>
</feature>
<feature type="domain" description="FAD-binding FR-type" evidence="2">
    <location>
        <begin position="8"/>
        <end position="131"/>
    </location>
</feature>
<protein>
    <recommendedName>
        <fullName evidence="5">Ferric vibriobactin reductase ViuB</fullName>
        <ecNumber evidence="1">1.16.1.7</ecNumber>
    </recommendedName>
    <alternativeName>
        <fullName evidence="5">Ferric chelate reductase</fullName>
        <shortName evidence="5">FCR</shortName>
    </alternativeName>
    <alternativeName>
        <fullName evidence="5">Ferric reductase</fullName>
    </alternativeName>
    <alternativeName>
        <fullName evidence="5">Ferric-vibriobactin utilization protein</fullName>
    </alternativeName>
    <alternativeName>
        <fullName evidence="5">Vibriobactin utilization protein B</fullName>
    </alternativeName>
</protein>
<sequence length="271" mass="30515">MSNEVERVYPRLLDFVRKKYVSKNLLRVTLTGEDLIGFPEDQNGSHIKVFFPNQASGILQLPIREGDKVIWPEHKPVPRAYTVRQYRAQSNELDIDFVVHGEGTPGGGWALKAQTGSQLGLIGPGGPDPLIEPADWHIMAGDLSAVPAISAILEKMPSQAKGYVFLEVDDIEDKHDISHPEQMVIKWLVRDPNQAQPVLAMAIEQLPVPQGAESLSAFVAGENESVIACRKILRNEYRIARDKIYAIPYWKRGKNEEAYHEERHVVMDEEF</sequence>
<name>VIUB_VIBC3</name>
<evidence type="ECO:0000250" key="1">
    <source>
        <dbReference type="UniProtKB" id="V5XKC3"/>
    </source>
</evidence>
<evidence type="ECO:0000255" key="2">
    <source>
        <dbReference type="PROSITE-ProRule" id="PRU00716"/>
    </source>
</evidence>
<evidence type="ECO:0000269" key="3">
    <source>
    </source>
</evidence>
<evidence type="ECO:0000303" key="4">
    <source>
    </source>
</evidence>
<evidence type="ECO:0000305" key="5"/>
<evidence type="ECO:0000312" key="6">
    <source>
        <dbReference type="EMBL" id="ABQ22022.1"/>
    </source>
</evidence>
<evidence type="ECO:0000312" key="7">
    <source>
        <dbReference type="EMBL" id="ACP10316.1"/>
    </source>
</evidence>
<dbReference type="EC" id="1.16.1.7" evidence="1"/>
<dbReference type="EMBL" id="AF030977">
    <property type="protein sequence ID" value="AAB86829.1"/>
    <property type="molecule type" value="Genomic_DNA"/>
</dbReference>
<dbReference type="EMBL" id="CP000627">
    <property type="protein sequence ID" value="ABQ22022.1"/>
    <property type="molecule type" value="Genomic_DNA"/>
</dbReference>
<dbReference type="EMBL" id="CP001235">
    <property type="protein sequence ID" value="ACP10316.1"/>
    <property type="molecule type" value="Genomic_DNA"/>
</dbReference>
<dbReference type="RefSeq" id="WP_000064348.1">
    <property type="nucleotide sequence ID" value="NZ_JAACZH010000022.1"/>
</dbReference>
<dbReference type="SMR" id="A5F660"/>
<dbReference type="KEGG" id="vco:VC0395_A1802"/>
<dbReference type="KEGG" id="vcr:VC395_2326"/>
<dbReference type="PATRIC" id="fig|345073.21.peg.2242"/>
<dbReference type="eggNOG" id="COG2375">
    <property type="taxonomic scope" value="Bacteria"/>
</dbReference>
<dbReference type="HOGENOM" id="CLU_040923_3_1_6"/>
<dbReference type="OrthoDB" id="9814826at2"/>
<dbReference type="Proteomes" id="UP000000249">
    <property type="component" value="Chromosome 2"/>
</dbReference>
<dbReference type="GO" id="GO:0005737">
    <property type="term" value="C:cytoplasm"/>
    <property type="evidence" value="ECO:0007669"/>
    <property type="project" value="UniProtKB-SubCell"/>
</dbReference>
<dbReference type="GO" id="GO:0140618">
    <property type="term" value="F:ferric-chelate reductase (NADH) activity"/>
    <property type="evidence" value="ECO:0000250"/>
    <property type="project" value="UniProtKB"/>
</dbReference>
<dbReference type="GO" id="GO:0019536">
    <property type="term" value="P:vibriobactin metabolic process"/>
    <property type="evidence" value="ECO:0000315"/>
    <property type="project" value="UniProtKB"/>
</dbReference>
<dbReference type="CDD" id="cd06193">
    <property type="entry name" value="siderophore_interacting"/>
    <property type="match status" value="1"/>
</dbReference>
<dbReference type="FunFam" id="2.40.30.10:FF:000181">
    <property type="entry name" value="Vibriobactin utilization protein ViuB"/>
    <property type="match status" value="1"/>
</dbReference>
<dbReference type="FunFam" id="3.40.50.80:FF:000038">
    <property type="entry name" value="Vibriobactin utilization protein ViuB"/>
    <property type="match status" value="1"/>
</dbReference>
<dbReference type="Gene3D" id="3.40.50.80">
    <property type="entry name" value="Nucleotide-binding domain of ferredoxin-NADP reductase (FNR) module"/>
    <property type="match status" value="1"/>
</dbReference>
<dbReference type="Gene3D" id="2.40.30.10">
    <property type="entry name" value="Translation factors"/>
    <property type="match status" value="1"/>
</dbReference>
<dbReference type="InterPro" id="IPR013113">
    <property type="entry name" value="FAD-bd_9_SIP"/>
</dbReference>
<dbReference type="InterPro" id="IPR017927">
    <property type="entry name" value="FAD-bd_FR_type"/>
</dbReference>
<dbReference type="InterPro" id="IPR039261">
    <property type="entry name" value="FNR_nucleotide-bd"/>
</dbReference>
<dbReference type="InterPro" id="IPR017938">
    <property type="entry name" value="Riboflavin_synthase-like_b-brl"/>
</dbReference>
<dbReference type="InterPro" id="IPR007037">
    <property type="entry name" value="SIP_C"/>
</dbReference>
<dbReference type="InterPro" id="IPR039374">
    <property type="entry name" value="SIP_fam"/>
</dbReference>
<dbReference type="PANTHER" id="PTHR30157">
    <property type="entry name" value="FERRIC REDUCTASE, NADPH-DEPENDENT"/>
    <property type="match status" value="1"/>
</dbReference>
<dbReference type="PANTHER" id="PTHR30157:SF0">
    <property type="entry name" value="NADPH-DEPENDENT FERRIC-CHELATE REDUCTASE"/>
    <property type="match status" value="1"/>
</dbReference>
<dbReference type="Pfam" id="PF08021">
    <property type="entry name" value="FAD_binding_9"/>
    <property type="match status" value="1"/>
</dbReference>
<dbReference type="Pfam" id="PF04954">
    <property type="entry name" value="SIP"/>
    <property type="match status" value="1"/>
</dbReference>
<dbReference type="SUPFAM" id="SSF63380">
    <property type="entry name" value="Riboflavin synthase domain-like"/>
    <property type="match status" value="1"/>
</dbReference>
<dbReference type="PROSITE" id="PS51384">
    <property type="entry name" value="FAD_FR"/>
    <property type="match status" value="1"/>
</dbReference>
<reference key="1">
    <citation type="journal article" date="1994" name="J. Bacteriol.">
        <title>Identification, cloning, and sequencing of a gene required for ferric vibriobactin utilization by Vibrio cholerae.</title>
        <authorList>
            <person name="Butterton J.R."/>
            <person name="Calderwood S.B."/>
        </authorList>
    </citation>
    <scope>NUCLEOTIDE SEQUENCE [GENOMIC DNA]</scope>
    <scope>FUNCTION IN THE INTRACELLULAR UTILIZATION OF FERRIC VIBRIOBACTIN</scope>
    <scope>INDUCTION</scope>
    <scope>DISRUPTION PHENOTYPE</scope>
</reference>
<reference key="2">
    <citation type="submission" date="1997-10" db="EMBL/GenBank/DDBJ databases">
        <authorList>
            <person name="Liao W.J."/>
            <person name="Choi M.H."/>
            <person name="Butterton J.R."/>
        </authorList>
    </citation>
    <scope>NUCLEOTIDE SEQUENCE [GENOMIC DNA]</scope>
</reference>
<reference key="3">
    <citation type="submission" date="2007-03" db="EMBL/GenBank/DDBJ databases">
        <authorList>
            <person name="Heidelberg J."/>
        </authorList>
    </citation>
    <scope>NUCLEOTIDE SEQUENCE [LARGE SCALE GENOMIC DNA]</scope>
    <source>
        <strain>ATCC 39541 / Classical Ogawa 395 / O395</strain>
    </source>
</reference>
<reference key="4">
    <citation type="journal article" date="2008" name="PLoS ONE">
        <title>A recalibrated molecular clock and independent origins for the cholera pandemic clones.</title>
        <authorList>
            <person name="Feng L."/>
            <person name="Reeves P.R."/>
            <person name="Lan R."/>
            <person name="Ren Y."/>
            <person name="Gao C."/>
            <person name="Zhou Z."/>
            <person name="Ren Y."/>
            <person name="Cheng J."/>
            <person name="Wang W."/>
            <person name="Wang J."/>
            <person name="Qian W."/>
            <person name="Li D."/>
            <person name="Wang L."/>
        </authorList>
    </citation>
    <scope>NUCLEOTIDE SEQUENCE [LARGE SCALE GENOMIC DNA]</scope>
    <source>
        <strain>ATCC 39541 / Classical Ogawa 395 / O395</strain>
    </source>
</reference>